<proteinExistence type="predicted"/>
<organismHost>
    <name type="scientific">Salmonella typhimurium</name>
    <dbReference type="NCBI Taxonomy" id="90371"/>
</organismHost>
<gene>
    <name type="primary">eac</name>
</gene>
<keyword id="KW-1185">Reference proteome</keyword>
<feature type="chain" id="PRO_0000077769" description="Eac protein">
    <location>
        <begin position="1"/>
        <end position="211"/>
    </location>
</feature>
<feature type="sequence conflict" description="In Ref. 1; AAC18880 and 2; AAF75004." evidence="1" ref="1 2">
    <original>IA</original>
    <variation>MP</variation>
    <location>
        <begin position="199"/>
        <end position="200"/>
    </location>
</feature>
<sequence length="211" mass="23865">MSGQSKYYDYYMVEGEDVKELIQSYDTINDQRNSILTTAAEKVGAIAWTTARSWGGEGGLLQSFVWEKGYEFPCQITIKREDFLDGKRVVIARGKGNTKEGRAYNKELDAIMHNANAKLKSLPEWNYYITNHYGIMRTGIGGQSGRGFGFVMLSTYGGKHPQRDDCLIFAIPNNKEERHGVVVIPDAFKKITYGQFYDIANAKEDEEETAE</sequence>
<name>VEAC_BPP22</name>
<accession>Q03545</accession>
<accession>A0A2H4A317</accession>
<accession>A8CG99</accession>
<accession>Q8LTF9</accession>
<dbReference type="EMBL" id="L06296">
    <property type="protein sequence ID" value="AAC18880.1"/>
    <property type="molecule type" value="Unassigned_DNA"/>
</dbReference>
<dbReference type="EMBL" id="AF217253">
    <property type="protein sequence ID" value="AAF75004.1"/>
    <property type="molecule type" value="Genomic_DNA"/>
</dbReference>
<dbReference type="EMBL" id="AB362338">
    <property type="protein sequence ID" value="BAF80740.1"/>
    <property type="molecule type" value="Genomic_DNA"/>
</dbReference>
<dbReference type="EMBL" id="AB426868">
    <property type="protein sequence ID" value="BAG12623.1"/>
    <property type="molecule type" value="Genomic_DNA"/>
</dbReference>
<dbReference type="EMBL" id="AF527608">
    <property type="protein sequence ID" value="AAM81402.1"/>
    <property type="molecule type" value="Genomic_DNA"/>
</dbReference>
<dbReference type="EMBL" id="BK000583">
    <property type="protein sequence ID" value="DAA01000.1"/>
    <property type="molecule type" value="Genomic_DNA"/>
</dbReference>
<dbReference type="PIR" id="S35280">
    <property type="entry name" value="S35280"/>
</dbReference>
<dbReference type="RefSeq" id="YP_063720.1">
    <property type="nucleotide sequence ID" value="NC_002371.2"/>
</dbReference>
<dbReference type="GeneID" id="2944222"/>
<dbReference type="KEGG" id="vg:2944222"/>
<dbReference type="OrthoDB" id="10148at10239"/>
<dbReference type="Proteomes" id="UP000001315">
    <property type="component" value="Segment"/>
</dbReference>
<dbReference type="Proteomes" id="UP000001795">
    <property type="component" value="Segment"/>
</dbReference>
<dbReference type="Proteomes" id="UP000001796">
    <property type="component" value="Segment"/>
</dbReference>
<dbReference type="Proteomes" id="UP000002165">
    <property type="component" value="Segment"/>
</dbReference>
<dbReference type="Proteomes" id="UP000007960">
    <property type="component" value="Segment"/>
</dbReference>
<organism>
    <name type="scientific">Salmonella phage P22</name>
    <name type="common">Bacteriophage P22</name>
    <dbReference type="NCBI Taxonomy" id="10754"/>
    <lineage>
        <taxon>Viruses</taxon>
        <taxon>Duplodnaviria</taxon>
        <taxon>Heunggongvirae</taxon>
        <taxon>Uroviricota</taxon>
        <taxon>Caudoviricetes</taxon>
        <taxon>Lederbergvirus</taxon>
    </lineage>
</organism>
<evidence type="ECO:0000305" key="1"/>
<protein>
    <recommendedName>
        <fullName>Eac protein</fullName>
    </recommendedName>
</protein>
<reference key="1">
    <citation type="journal article" date="1993" name="Mol. Microbiol.">
        <title>The int genes of bacteriophages P22 and lambda are regulated by different mechanisms.</title>
        <authorList>
            <person name="Wulff D.L."/>
            <person name="Ho Y.S."/>
            <person name="Powers S."/>
            <person name="Rosenberg M."/>
        </authorList>
    </citation>
    <scope>NUCLEOTIDE SEQUENCE</scope>
</reference>
<reference key="2">
    <citation type="journal article" date="2000" name="J. Bacteriol.">
        <title>Sequence of the genome of Salmonella bacteriophage P22.</title>
        <authorList>
            <person name="Vander Byl C.S."/>
            <person name="Kropinski A.M.B."/>
        </authorList>
    </citation>
    <scope>NUCLEOTIDE SEQUENCE [LARGE SCALE GENOMIC DNA]</scope>
</reference>
<reference key="3">
    <citation type="journal article" date="2003" name="J. Bacteriol.">
        <title>Corrected sequence of the bacteriophage P22 genome.</title>
        <authorList>
            <person name="Pedulla M.L."/>
            <person name="Ford M.E."/>
            <person name="Karthikeyan T."/>
            <person name="Houtz J.M."/>
            <person name="Hendrix R.W."/>
            <person name="Hatfull G.F."/>
            <person name="Poteete A.R."/>
            <person name="Gilcrease E.B."/>
            <person name="Winn-Stapley D.A."/>
            <person name="Casjens S.R."/>
        </authorList>
    </citation>
    <scope>NUCLEOTIDE SEQUENCE [LARGE SCALE GENOMIC DNA]</scope>
</reference>
<reference key="4">
    <citation type="submission" date="2008-03" db="EMBL/GenBank/DDBJ databases">
        <title>The Molecular Identity of Contaminant Hydrology (20 years later).</title>
        <authorList>
            <person name="Masago Y."/>
            <person name="Fong T.T."/>
            <person name="Rose J.B."/>
        </authorList>
    </citation>
    <scope>NUCLEOTIDE SEQUENCE [LARGE SCALE GENOMIC DNA]</scope>
    <source>
        <strain>ATCC 19585-B1</strain>
    </source>
</reference>
<reference key="5">
    <citation type="journal article" date="2008" name="Appl. Environ. Microbiol.">
        <title>Bacteriophage P22 and Staphylococcus aureus attenuation on nonporous fomites as determined by plate assay and quantitative PCR.</title>
        <authorList>
            <person name="Masago Y."/>
            <person name="Shibata T."/>
            <person name="Rose J.B."/>
        </authorList>
    </citation>
    <scope>NUCLEOTIDE SEQUENCE [LARGE SCALE GENOMIC DNA]</scope>
    <source>
        <strain>MSU</strain>
    </source>
</reference>